<sequence length="54" mass="5927">MWTLKARKEHTGISGKPTARTDRHGSTRSGDSELQASARRFSRLPDRCGAQGVT</sequence>
<name>SOCB_MYCTU</name>
<reference key="1">
    <citation type="journal article" date="2011" name="Mol. Microbiol.">
        <title>A novel copper-responsive regulon in Mycobacterium tuberculosis.</title>
        <authorList>
            <person name="Festa R.A."/>
            <person name="Jones M.B."/>
            <person name="Butler-Wu S."/>
            <person name="Sinsimer D."/>
            <person name="Gerads R."/>
            <person name="Bishai W.R."/>
            <person name="Peterson S.N."/>
            <person name="Darwin K.H."/>
        </authorList>
    </citation>
    <scope>NUCLEOTIDE SEQUENCE [GENOMIC DNA]</scope>
    <scope>IDENTIFICATION</scope>
    <scope>INDUCTION</scope>
    <source>
        <strain>ATCC 25618 / H37Rv</strain>
    </source>
</reference>
<reference key="2">
    <citation type="journal article" date="1998" name="Nature">
        <title>Deciphering the biology of Mycobacterium tuberculosis from the complete genome sequence.</title>
        <authorList>
            <person name="Cole S.T."/>
            <person name="Brosch R."/>
            <person name="Parkhill J."/>
            <person name="Garnier T."/>
            <person name="Churcher C.M."/>
            <person name="Harris D.E."/>
            <person name="Gordon S.V."/>
            <person name="Eiglmeier K."/>
            <person name="Gas S."/>
            <person name="Barry C.E. III"/>
            <person name="Tekaia F."/>
            <person name="Badcock K."/>
            <person name="Basham D."/>
            <person name="Brown D."/>
            <person name="Chillingworth T."/>
            <person name="Connor R."/>
            <person name="Davies R.M."/>
            <person name="Devlin K."/>
            <person name="Feltwell T."/>
            <person name="Gentles S."/>
            <person name="Hamlin N."/>
            <person name="Holroyd S."/>
            <person name="Hornsby T."/>
            <person name="Jagels K."/>
            <person name="Krogh A."/>
            <person name="McLean J."/>
            <person name="Moule S."/>
            <person name="Murphy L.D."/>
            <person name="Oliver S."/>
            <person name="Osborne J."/>
            <person name="Quail M.A."/>
            <person name="Rajandream M.A."/>
            <person name="Rogers J."/>
            <person name="Rutter S."/>
            <person name="Seeger K."/>
            <person name="Skelton S."/>
            <person name="Squares S."/>
            <person name="Squares R."/>
            <person name="Sulston J.E."/>
            <person name="Taylor K."/>
            <person name="Whitehead S."/>
            <person name="Barrell B.G."/>
        </authorList>
    </citation>
    <scope>NUCLEOTIDE SEQUENCE [LARGE SCALE GENOMIC DNA]</scope>
    <source>
        <strain>ATCC 25618 / H37Rv</strain>
    </source>
</reference>
<proteinExistence type="evidence at transcript level"/>
<organism>
    <name type="scientific">Mycobacterium tuberculosis (strain ATCC 25618 / H37Rv)</name>
    <dbReference type="NCBI Taxonomy" id="83332"/>
    <lineage>
        <taxon>Bacteria</taxon>
        <taxon>Bacillati</taxon>
        <taxon>Actinomycetota</taxon>
        <taxon>Actinomycetes</taxon>
        <taxon>Mycobacteriales</taxon>
        <taxon>Mycobacteriaceae</taxon>
        <taxon>Mycobacterium</taxon>
        <taxon>Mycobacterium tuberculosis complex</taxon>
    </lineage>
</organism>
<evidence type="ECO:0000256" key="1">
    <source>
        <dbReference type="SAM" id="MobiDB-lite"/>
    </source>
</evidence>
<evidence type="ECO:0000269" key="2">
    <source>
    </source>
</evidence>
<evidence type="ECO:0000303" key="3">
    <source>
    </source>
</evidence>
<evidence type="ECO:0000305" key="4"/>
<accession>E2FZM5</accession>
<feature type="chain" id="PRO_0000433097" description="Uncharacterized protein SocB">
    <location>
        <begin position="1"/>
        <end position="54"/>
    </location>
</feature>
<feature type="region of interest" description="Disordered" evidence="1">
    <location>
        <begin position="1"/>
        <end position="54"/>
    </location>
</feature>
<dbReference type="EMBL" id="HM222605">
    <property type="protein sequence ID" value="ADH04622.1"/>
    <property type="molecule type" value="Genomic_DNA"/>
</dbReference>
<dbReference type="EMBL" id="AL123456">
    <property type="status" value="NOT_ANNOTATED_CDS"/>
    <property type="molecule type" value="Genomic_DNA"/>
</dbReference>
<dbReference type="SMR" id="E2FZM5"/>
<dbReference type="InParanoid" id="E2FZM5"/>
<dbReference type="Proteomes" id="UP000001584">
    <property type="component" value="Chromosome"/>
</dbReference>
<protein>
    <recommendedName>
        <fullName evidence="4">Uncharacterized protein SocB</fullName>
    </recommendedName>
    <alternativeName>
        <fullName evidence="3">Small ORF induced by copper B</fullName>
    </alternativeName>
</protein>
<gene>
    <name evidence="3" type="primary">socB</name>
    <name evidence="4" type="ordered locus">Rv1706c.2</name>
</gene>
<comment type="induction">
    <text evidence="2">Repressed by RicR. Induced by copper.</text>
</comment>
<keyword id="KW-1185">Reference proteome</keyword>